<dbReference type="EC" id="6.-.-.-" evidence="1"/>
<dbReference type="EMBL" id="CP000485">
    <property type="protein sequence ID" value="ABK86783.1"/>
    <property type="status" value="ALT_INIT"/>
    <property type="molecule type" value="Genomic_DNA"/>
</dbReference>
<dbReference type="RefSeq" id="WP_000403058.1">
    <property type="nucleotide sequence ID" value="NC_008600.1"/>
</dbReference>
<dbReference type="SMR" id="A0RHU0"/>
<dbReference type="KEGG" id="btl:BALH_3549"/>
<dbReference type="HOGENOM" id="CLU_022249_1_0_9"/>
<dbReference type="GO" id="GO:0016874">
    <property type="term" value="F:ligase activity"/>
    <property type="evidence" value="ECO:0007669"/>
    <property type="project" value="UniProtKB-UniRule"/>
</dbReference>
<dbReference type="HAMAP" id="MF_01867">
    <property type="entry name" value="BshC"/>
    <property type="match status" value="1"/>
</dbReference>
<dbReference type="InterPro" id="IPR011199">
    <property type="entry name" value="Bacillithiol_biosynth_BshC"/>
</dbReference>
<dbReference type="InterPro" id="IPR055399">
    <property type="entry name" value="CC_BshC"/>
</dbReference>
<dbReference type="InterPro" id="IPR055398">
    <property type="entry name" value="Rossmann-like_BshC"/>
</dbReference>
<dbReference type="NCBIfam" id="TIGR03998">
    <property type="entry name" value="thiol_BshC"/>
    <property type="match status" value="1"/>
</dbReference>
<dbReference type="Pfam" id="PF24850">
    <property type="entry name" value="CC_BshC"/>
    <property type="match status" value="1"/>
</dbReference>
<dbReference type="Pfam" id="PF10079">
    <property type="entry name" value="Rossmann-like_BshC"/>
    <property type="match status" value="1"/>
</dbReference>
<dbReference type="PIRSF" id="PIRSF012535">
    <property type="entry name" value="UCP012535"/>
    <property type="match status" value="1"/>
</dbReference>
<sequence length="538" mass="62931">MEIKEISVPQQGVVADYMNGKKEIQSCFDYMLTEDAFKQRVQDLREREFFRQDLVTHLLEYNTKLQAGEATIQNVKALGDENTYVVIAGQQAGLLTGPLYTIHKIISVLQLAKEKEESLGVKVVPVFWIAGEDHDMDEINHTFVTKNKKIKKTIFHDRNPKKASASESELSLEDCRKWIEEIFKTYPETNFTKDVLQFVDDSLRKSNTYVDFFGHLIMKMFVNSGLILVDSHHPELRKLEVPFFKQIVSKYKEVQEGLHNQQEVIKELGYKPIIETKSNAVHIFMEIDNERVLLEDNQGKFVGKDGTYSFSYEELIEEMERSPERFSNNVVTRPLMQEYVFPTLAFIGGPGELAYWSELQQVFHTIGFRMPPVVPRITITYIERDIATDLHDLQLQERDPFLNNVDKLRENWLSNQIEEPIDDRFVEAKKEIMNIHTSLQQFVKEIDPGLSAFAGKNEFKINEQIELLERMLKRNVEKKHEVELNKFRRIQFALRPLGAPQERVWNVCYYLNQFGLDFVDHVMEKTFSWNGKHHVIKL</sequence>
<feature type="chain" id="PRO_0000378221" description="Putative cysteine ligase BshC">
    <location>
        <begin position="1"/>
        <end position="538"/>
    </location>
</feature>
<feature type="coiled-coil region" evidence="1">
    <location>
        <begin position="460"/>
        <end position="484"/>
    </location>
</feature>
<accession>A0RHU0</accession>
<keyword id="KW-0175">Coiled coil</keyword>
<keyword id="KW-0436">Ligase</keyword>
<comment type="function">
    <text evidence="1">Involved in bacillithiol (BSH) biosynthesis. May catalyze the last step of the pathway, the addition of cysteine to glucosamine malate (GlcN-Mal) to generate BSH.</text>
</comment>
<comment type="similarity">
    <text evidence="1">Belongs to the BshC family.</text>
</comment>
<comment type="sequence caution" evidence="2">
    <conflict type="erroneous initiation">
        <sequence resource="EMBL-CDS" id="ABK86783"/>
    </conflict>
</comment>
<name>BSHC_BACAH</name>
<organism>
    <name type="scientific">Bacillus thuringiensis (strain Al Hakam)</name>
    <dbReference type="NCBI Taxonomy" id="412694"/>
    <lineage>
        <taxon>Bacteria</taxon>
        <taxon>Bacillati</taxon>
        <taxon>Bacillota</taxon>
        <taxon>Bacilli</taxon>
        <taxon>Bacillales</taxon>
        <taxon>Bacillaceae</taxon>
        <taxon>Bacillus</taxon>
        <taxon>Bacillus cereus group</taxon>
    </lineage>
</organism>
<protein>
    <recommendedName>
        <fullName evidence="1">Putative cysteine ligase BshC</fullName>
        <ecNumber evidence="1">6.-.-.-</ecNumber>
    </recommendedName>
</protein>
<reference key="1">
    <citation type="journal article" date="2007" name="J. Bacteriol.">
        <title>The complete genome sequence of Bacillus thuringiensis Al Hakam.</title>
        <authorList>
            <person name="Challacombe J.F."/>
            <person name="Altherr M.R."/>
            <person name="Xie G."/>
            <person name="Bhotika S.S."/>
            <person name="Brown N."/>
            <person name="Bruce D."/>
            <person name="Campbell C.S."/>
            <person name="Campbell M.L."/>
            <person name="Chen J."/>
            <person name="Chertkov O."/>
            <person name="Cleland C."/>
            <person name="Dimitrijevic M."/>
            <person name="Doggett N.A."/>
            <person name="Fawcett J.J."/>
            <person name="Glavina T."/>
            <person name="Goodwin L.A."/>
            <person name="Green L.D."/>
            <person name="Han C.S."/>
            <person name="Hill K.K."/>
            <person name="Hitchcock P."/>
            <person name="Jackson P.J."/>
            <person name="Keim P."/>
            <person name="Kewalramani A.R."/>
            <person name="Longmire J."/>
            <person name="Lucas S."/>
            <person name="Malfatti S."/>
            <person name="Martinez D."/>
            <person name="McMurry K."/>
            <person name="Meincke L.J."/>
            <person name="Misra M."/>
            <person name="Moseman B.L."/>
            <person name="Mundt M."/>
            <person name="Munk A.C."/>
            <person name="Okinaka R.T."/>
            <person name="Parson-Quintana B."/>
            <person name="Reilly L.P."/>
            <person name="Richardson P."/>
            <person name="Robinson D.L."/>
            <person name="Saunders E."/>
            <person name="Tapia R."/>
            <person name="Tesmer J.G."/>
            <person name="Thayer N."/>
            <person name="Thompson L.S."/>
            <person name="Tice H."/>
            <person name="Ticknor L.O."/>
            <person name="Wills P.L."/>
            <person name="Gilna P."/>
            <person name="Brettin T.S."/>
        </authorList>
    </citation>
    <scope>NUCLEOTIDE SEQUENCE [LARGE SCALE GENOMIC DNA]</scope>
    <source>
        <strain>Al Hakam</strain>
    </source>
</reference>
<proteinExistence type="inferred from homology"/>
<evidence type="ECO:0000255" key="1">
    <source>
        <dbReference type="HAMAP-Rule" id="MF_01867"/>
    </source>
</evidence>
<evidence type="ECO:0000305" key="2"/>
<gene>
    <name evidence="1" type="primary">bshC</name>
    <name type="ordered locus">BALH_3549</name>
</gene>